<dbReference type="EC" id="2.3.1.275" evidence="1"/>
<dbReference type="EMBL" id="CP000376">
    <property type="protein sequence ID" value="ABF62047.1"/>
    <property type="molecule type" value="Genomic_DNA"/>
</dbReference>
<dbReference type="RefSeq" id="WP_011536693.1">
    <property type="nucleotide sequence ID" value="NC_008043.1"/>
</dbReference>
<dbReference type="SMR" id="Q1GMR9"/>
<dbReference type="KEGG" id="sit:TM1040_3073"/>
<dbReference type="HOGENOM" id="CLU_081254_1_0_5"/>
<dbReference type="UniPathway" id="UPA00085"/>
<dbReference type="Proteomes" id="UP000000636">
    <property type="component" value="Plasmid megaplasmid TM1040"/>
</dbReference>
<dbReference type="GO" id="GO:0005886">
    <property type="term" value="C:plasma membrane"/>
    <property type="evidence" value="ECO:0007669"/>
    <property type="project" value="UniProtKB-SubCell"/>
</dbReference>
<dbReference type="GO" id="GO:0043772">
    <property type="term" value="F:acyl-phosphate glycerol-3-phosphate acyltransferase activity"/>
    <property type="evidence" value="ECO:0007669"/>
    <property type="project" value="UniProtKB-UniRule"/>
</dbReference>
<dbReference type="GO" id="GO:0008654">
    <property type="term" value="P:phospholipid biosynthetic process"/>
    <property type="evidence" value="ECO:0007669"/>
    <property type="project" value="UniProtKB-UniRule"/>
</dbReference>
<dbReference type="HAMAP" id="MF_01043">
    <property type="entry name" value="PlsY"/>
    <property type="match status" value="1"/>
</dbReference>
<dbReference type="InterPro" id="IPR003811">
    <property type="entry name" value="G3P_acylTferase_PlsY"/>
</dbReference>
<dbReference type="NCBIfam" id="TIGR00023">
    <property type="entry name" value="glycerol-3-phosphate 1-O-acyltransferase PlsY"/>
    <property type="match status" value="1"/>
</dbReference>
<dbReference type="PANTHER" id="PTHR30309:SF0">
    <property type="entry name" value="GLYCEROL-3-PHOSPHATE ACYLTRANSFERASE-RELATED"/>
    <property type="match status" value="1"/>
</dbReference>
<dbReference type="PANTHER" id="PTHR30309">
    <property type="entry name" value="INNER MEMBRANE PROTEIN YGIH"/>
    <property type="match status" value="1"/>
</dbReference>
<dbReference type="Pfam" id="PF02660">
    <property type="entry name" value="G3P_acyltransf"/>
    <property type="match status" value="1"/>
</dbReference>
<dbReference type="SMART" id="SM01207">
    <property type="entry name" value="G3P_acyltransf"/>
    <property type="match status" value="1"/>
</dbReference>
<protein>
    <recommendedName>
        <fullName evidence="1">Glycerol-3-phosphate acyltransferase</fullName>
    </recommendedName>
    <alternativeName>
        <fullName evidence="1">Acyl-PO4 G3P acyltransferase</fullName>
    </alternativeName>
    <alternativeName>
        <fullName evidence="1">Acyl-phosphate--glycerol-3-phosphate acyltransferase</fullName>
    </alternativeName>
    <alternativeName>
        <fullName evidence="1">G3P acyltransferase</fullName>
        <shortName evidence="1">GPAT</shortName>
        <ecNumber evidence="1">2.3.1.275</ecNumber>
    </alternativeName>
    <alternativeName>
        <fullName evidence="1">Lysophosphatidic acid synthase</fullName>
        <shortName evidence="1">LPA synthase</shortName>
    </alternativeName>
</protein>
<reference key="1">
    <citation type="submission" date="2006-05" db="EMBL/GenBank/DDBJ databases">
        <title>Complete sequence of megaplasmid of Silicibacter sp. TM1040.</title>
        <authorList>
            <consortium name="US DOE Joint Genome Institute"/>
            <person name="Copeland A."/>
            <person name="Lucas S."/>
            <person name="Lapidus A."/>
            <person name="Barry K."/>
            <person name="Detter J.C."/>
            <person name="Glavina del Rio T."/>
            <person name="Hammon N."/>
            <person name="Israni S."/>
            <person name="Dalin E."/>
            <person name="Tice H."/>
            <person name="Pitluck S."/>
            <person name="Brettin T."/>
            <person name="Bruce D."/>
            <person name="Han C."/>
            <person name="Tapia R."/>
            <person name="Goodwin L."/>
            <person name="Thompson L.S."/>
            <person name="Gilna P."/>
            <person name="Schmutz J."/>
            <person name="Larimer F."/>
            <person name="Land M."/>
            <person name="Hauser L."/>
            <person name="Kyrpides N."/>
            <person name="Kim E."/>
            <person name="Belas R."/>
            <person name="Moran M.A."/>
            <person name="Buchan A."/>
            <person name="Gonzalez J.M."/>
            <person name="Schell M.A."/>
            <person name="Sun F."/>
            <person name="Richardson P."/>
        </authorList>
    </citation>
    <scope>NUCLEOTIDE SEQUENCE [LARGE SCALE GENOMIC DNA]</scope>
    <source>
        <strain>TM1040</strain>
    </source>
</reference>
<geneLocation type="plasmid">
    <name>megaplasmid TM1040</name>
</geneLocation>
<accession>Q1GMR9</accession>
<organism>
    <name type="scientific">Ruegeria sp. (strain TM1040)</name>
    <name type="common">Silicibacter sp.</name>
    <dbReference type="NCBI Taxonomy" id="292414"/>
    <lineage>
        <taxon>Bacteria</taxon>
        <taxon>Pseudomonadati</taxon>
        <taxon>Pseudomonadota</taxon>
        <taxon>Alphaproteobacteria</taxon>
        <taxon>Rhodobacterales</taxon>
        <taxon>Roseobacteraceae</taxon>
        <taxon>Ruegeria</taxon>
    </lineage>
</organism>
<keyword id="KW-0997">Cell inner membrane</keyword>
<keyword id="KW-1003">Cell membrane</keyword>
<keyword id="KW-0444">Lipid biosynthesis</keyword>
<keyword id="KW-0443">Lipid metabolism</keyword>
<keyword id="KW-0472">Membrane</keyword>
<keyword id="KW-0594">Phospholipid biosynthesis</keyword>
<keyword id="KW-1208">Phospholipid metabolism</keyword>
<keyword id="KW-0614">Plasmid</keyword>
<keyword id="KW-1185">Reference proteome</keyword>
<keyword id="KW-0808">Transferase</keyword>
<keyword id="KW-0812">Transmembrane</keyword>
<keyword id="KW-1133">Transmembrane helix</keyword>
<sequence>MLPALETTLPLLLFWGGIGYLLGSVPFGMVITRAFGLGNLREIGSGNIGTTNVLRTGSKAAAAATLLLDGGKGAAAVLLARALAGEDAAQLAGLLAFLGHCFPVWLGFKGGKGVATFLGLMLALAWPVGIACCLTWLGVAVLRRISSLAALCAAVAAPVWCLLLGAPQAAVLSALLALVILWRHRENIARLRAGTEPKIGQK</sequence>
<proteinExistence type="inferred from homology"/>
<feature type="chain" id="PRO_0000250330" description="Glycerol-3-phosphate acyltransferase">
    <location>
        <begin position="1"/>
        <end position="202"/>
    </location>
</feature>
<feature type="transmembrane region" description="Helical" evidence="1">
    <location>
        <begin position="11"/>
        <end position="31"/>
    </location>
</feature>
<feature type="transmembrane region" description="Helical" evidence="1">
    <location>
        <begin position="60"/>
        <end position="80"/>
    </location>
</feature>
<feature type="transmembrane region" description="Helical" evidence="1">
    <location>
        <begin position="88"/>
        <end position="108"/>
    </location>
</feature>
<feature type="transmembrane region" description="Helical" evidence="1">
    <location>
        <begin position="117"/>
        <end position="137"/>
    </location>
</feature>
<feature type="transmembrane region" description="Helical" evidence="1">
    <location>
        <begin position="162"/>
        <end position="182"/>
    </location>
</feature>
<name>PLSY_RUEST</name>
<gene>
    <name evidence="1" type="primary">plsY</name>
    <name type="ordered locus">TM1040_3073</name>
</gene>
<comment type="function">
    <text evidence="1">Catalyzes the transfer of an acyl group from acyl-phosphate (acyl-PO(4)) to glycerol-3-phosphate (G3P) to form lysophosphatidic acid (LPA). This enzyme utilizes acyl-phosphate as fatty acyl donor, but not acyl-CoA or acyl-ACP.</text>
</comment>
<comment type="catalytic activity">
    <reaction evidence="1">
        <text>an acyl phosphate + sn-glycerol 3-phosphate = a 1-acyl-sn-glycero-3-phosphate + phosphate</text>
        <dbReference type="Rhea" id="RHEA:34075"/>
        <dbReference type="ChEBI" id="CHEBI:43474"/>
        <dbReference type="ChEBI" id="CHEBI:57597"/>
        <dbReference type="ChEBI" id="CHEBI:57970"/>
        <dbReference type="ChEBI" id="CHEBI:59918"/>
        <dbReference type="EC" id="2.3.1.275"/>
    </reaction>
</comment>
<comment type="pathway">
    <text evidence="1">Lipid metabolism; phospholipid metabolism.</text>
</comment>
<comment type="subunit">
    <text evidence="1">Probably interacts with PlsX.</text>
</comment>
<comment type="subcellular location">
    <subcellularLocation>
        <location evidence="1">Cell inner membrane</location>
        <topology evidence="1">Multi-pass membrane protein</topology>
    </subcellularLocation>
</comment>
<comment type="similarity">
    <text evidence="1">Belongs to the PlsY family.</text>
</comment>
<evidence type="ECO:0000255" key="1">
    <source>
        <dbReference type="HAMAP-Rule" id="MF_01043"/>
    </source>
</evidence>